<name>GSHB_BORPE</name>
<proteinExistence type="inferred from homology"/>
<accession>Q7VY62</accession>
<keyword id="KW-0067">ATP-binding</keyword>
<keyword id="KW-0317">Glutathione biosynthesis</keyword>
<keyword id="KW-0436">Ligase</keyword>
<keyword id="KW-0460">Magnesium</keyword>
<keyword id="KW-0464">Manganese</keyword>
<keyword id="KW-0479">Metal-binding</keyword>
<keyword id="KW-0547">Nucleotide-binding</keyword>
<keyword id="KW-1185">Reference proteome</keyword>
<reference key="1">
    <citation type="journal article" date="2003" name="Nat. Genet.">
        <title>Comparative analysis of the genome sequences of Bordetella pertussis, Bordetella parapertussis and Bordetella bronchiseptica.</title>
        <authorList>
            <person name="Parkhill J."/>
            <person name="Sebaihia M."/>
            <person name="Preston A."/>
            <person name="Murphy L.D."/>
            <person name="Thomson N.R."/>
            <person name="Harris D.E."/>
            <person name="Holden M.T.G."/>
            <person name="Churcher C.M."/>
            <person name="Bentley S.D."/>
            <person name="Mungall K.L."/>
            <person name="Cerdeno-Tarraga A.-M."/>
            <person name="Temple L."/>
            <person name="James K.D."/>
            <person name="Harris B."/>
            <person name="Quail M.A."/>
            <person name="Achtman M."/>
            <person name="Atkin R."/>
            <person name="Baker S."/>
            <person name="Basham D."/>
            <person name="Bason N."/>
            <person name="Cherevach I."/>
            <person name="Chillingworth T."/>
            <person name="Collins M."/>
            <person name="Cronin A."/>
            <person name="Davis P."/>
            <person name="Doggett J."/>
            <person name="Feltwell T."/>
            <person name="Goble A."/>
            <person name="Hamlin N."/>
            <person name="Hauser H."/>
            <person name="Holroyd S."/>
            <person name="Jagels K."/>
            <person name="Leather S."/>
            <person name="Moule S."/>
            <person name="Norberczak H."/>
            <person name="O'Neil S."/>
            <person name="Ormond D."/>
            <person name="Price C."/>
            <person name="Rabbinowitsch E."/>
            <person name="Rutter S."/>
            <person name="Sanders M."/>
            <person name="Saunders D."/>
            <person name="Seeger K."/>
            <person name="Sharp S."/>
            <person name="Simmonds M."/>
            <person name="Skelton J."/>
            <person name="Squares R."/>
            <person name="Squares S."/>
            <person name="Stevens K."/>
            <person name="Unwin L."/>
            <person name="Whitehead S."/>
            <person name="Barrell B.G."/>
            <person name="Maskell D.J."/>
        </authorList>
    </citation>
    <scope>NUCLEOTIDE SEQUENCE [LARGE SCALE GENOMIC DNA]</scope>
    <source>
        <strain>Tohama I / ATCC BAA-589 / NCTC 13251</strain>
    </source>
</reference>
<organism>
    <name type="scientific">Bordetella pertussis (strain Tohama I / ATCC BAA-589 / NCTC 13251)</name>
    <dbReference type="NCBI Taxonomy" id="257313"/>
    <lineage>
        <taxon>Bacteria</taxon>
        <taxon>Pseudomonadati</taxon>
        <taxon>Pseudomonadota</taxon>
        <taxon>Betaproteobacteria</taxon>
        <taxon>Burkholderiales</taxon>
        <taxon>Alcaligenaceae</taxon>
        <taxon>Bordetella</taxon>
    </lineage>
</organism>
<sequence>MHVLFIIDPLPLLKAYKDSSVAMMQALQARGHTLSVALQGDLYIDAGEVRTRFAPIALRDGADLHGHDWWRETGAADEAPLARFDAVVMRKDPPFDMEYVYSTHLLEYAQQQGARVFNSGAAIRNHPEKLAITEFPDLTTPTLVTRDMARIRAFHAAQGDVIVKPLDDMGGTGIFRLQRSEPNLNAILETLTDNGTRTIMAQRYIPEIVKGDKRILLIGGEPMPYSLARIPLAGETRGNLAAGGRGVAQPLSERDLHLARTVADRLAGRGLLLVGLDVIGDYITEVNVTSPTCFVEITEQTGFNVPEMFAVALESAAG</sequence>
<gene>
    <name evidence="2" type="primary">gshB</name>
    <name type="synonym">gsh-II</name>
    <name type="ordered locus">BP1499</name>
</gene>
<protein>
    <recommendedName>
        <fullName evidence="2">Glutathione synthetase</fullName>
        <ecNumber evidence="2">6.3.2.3</ecNumber>
    </recommendedName>
    <alternativeName>
        <fullName evidence="2">GSH synthetase</fullName>
        <shortName evidence="2">GSH-S</shortName>
        <shortName evidence="2">GSHase</shortName>
    </alternativeName>
    <alternativeName>
        <fullName evidence="2">Glutathione synthase</fullName>
    </alternativeName>
</protein>
<feature type="chain" id="PRO_0000197455" description="Glutathione synthetase">
    <location>
        <begin position="1"/>
        <end position="318"/>
    </location>
</feature>
<feature type="domain" description="ATP-grasp" evidence="2">
    <location>
        <begin position="129"/>
        <end position="314"/>
    </location>
</feature>
<feature type="binding site" evidence="2">
    <location>
        <begin position="155"/>
        <end position="211"/>
    </location>
    <ligand>
        <name>ATP</name>
        <dbReference type="ChEBI" id="CHEBI:30616"/>
    </ligand>
</feature>
<feature type="binding site" evidence="2">
    <location>
        <position position="285"/>
    </location>
    <ligand>
        <name>Mg(2+)</name>
        <dbReference type="ChEBI" id="CHEBI:18420"/>
    </ligand>
</feature>
<feature type="binding site" evidence="2">
    <location>
        <position position="287"/>
    </location>
    <ligand>
        <name>Mg(2+)</name>
        <dbReference type="ChEBI" id="CHEBI:18420"/>
    </ligand>
</feature>
<evidence type="ECO:0000250" key="1"/>
<evidence type="ECO:0000255" key="2">
    <source>
        <dbReference type="HAMAP-Rule" id="MF_00162"/>
    </source>
</evidence>
<comment type="catalytic activity">
    <reaction evidence="2">
        <text>gamma-L-glutamyl-L-cysteine + glycine + ATP = glutathione + ADP + phosphate + H(+)</text>
        <dbReference type="Rhea" id="RHEA:13557"/>
        <dbReference type="ChEBI" id="CHEBI:15378"/>
        <dbReference type="ChEBI" id="CHEBI:30616"/>
        <dbReference type="ChEBI" id="CHEBI:43474"/>
        <dbReference type="ChEBI" id="CHEBI:57305"/>
        <dbReference type="ChEBI" id="CHEBI:57925"/>
        <dbReference type="ChEBI" id="CHEBI:58173"/>
        <dbReference type="ChEBI" id="CHEBI:456216"/>
        <dbReference type="EC" id="6.3.2.3"/>
    </reaction>
</comment>
<comment type="cofactor">
    <cofactor evidence="1">
        <name>Mg(2+)</name>
        <dbReference type="ChEBI" id="CHEBI:18420"/>
    </cofactor>
    <cofactor evidence="1">
        <name>Mn(2+)</name>
        <dbReference type="ChEBI" id="CHEBI:29035"/>
    </cofactor>
    <text evidence="1">Binds 1 Mg(2+) or Mn(2+) ion per subunit.</text>
</comment>
<comment type="pathway">
    <text evidence="2">Sulfur metabolism; glutathione biosynthesis; glutathione from L-cysteine and L-glutamate: step 2/2.</text>
</comment>
<comment type="similarity">
    <text evidence="2">Belongs to the prokaryotic GSH synthase family.</text>
</comment>
<dbReference type="EC" id="6.3.2.3" evidence="2"/>
<dbReference type="EMBL" id="BX640415">
    <property type="protein sequence ID" value="CAE41788.1"/>
    <property type="molecule type" value="Genomic_DNA"/>
</dbReference>
<dbReference type="RefSeq" id="NP_880235.1">
    <property type="nucleotide sequence ID" value="NC_002929.2"/>
</dbReference>
<dbReference type="RefSeq" id="WP_010930391.1">
    <property type="nucleotide sequence ID" value="NZ_CP039022.1"/>
</dbReference>
<dbReference type="SMR" id="Q7VY62"/>
<dbReference type="STRING" id="257313.BP1499"/>
<dbReference type="PaxDb" id="257313-BP1499"/>
<dbReference type="GeneID" id="69601418"/>
<dbReference type="KEGG" id="bpe:BP1499"/>
<dbReference type="PATRIC" id="fig|257313.5.peg.1610"/>
<dbReference type="eggNOG" id="COG0189">
    <property type="taxonomic scope" value="Bacteria"/>
</dbReference>
<dbReference type="HOGENOM" id="CLU_068239_0_0_4"/>
<dbReference type="UniPathway" id="UPA00142">
    <property type="reaction ID" value="UER00210"/>
</dbReference>
<dbReference type="Proteomes" id="UP000002676">
    <property type="component" value="Chromosome"/>
</dbReference>
<dbReference type="GO" id="GO:0005737">
    <property type="term" value="C:cytoplasm"/>
    <property type="evidence" value="ECO:0007669"/>
    <property type="project" value="TreeGrafter"/>
</dbReference>
<dbReference type="GO" id="GO:0005524">
    <property type="term" value="F:ATP binding"/>
    <property type="evidence" value="ECO:0007669"/>
    <property type="project" value="UniProtKB-UniRule"/>
</dbReference>
<dbReference type="GO" id="GO:0004363">
    <property type="term" value="F:glutathione synthase activity"/>
    <property type="evidence" value="ECO:0007669"/>
    <property type="project" value="UniProtKB-UniRule"/>
</dbReference>
<dbReference type="GO" id="GO:0046872">
    <property type="term" value="F:metal ion binding"/>
    <property type="evidence" value="ECO:0007669"/>
    <property type="project" value="UniProtKB-KW"/>
</dbReference>
<dbReference type="FunFam" id="3.30.1490.20:FF:000009">
    <property type="entry name" value="Glutathione synthetase"/>
    <property type="match status" value="1"/>
</dbReference>
<dbReference type="Gene3D" id="3.40.50.20">
    <property type="match status" value="1"/>
</dbReference>
<dbReference type="Gene3D" id="3.30.1490.20">
    <property type="entry name" value="ATP-grasp fold, A domain"/>
    <property type="match status" value="1"/>
</dbReference>
<dbReference type="Gene3D" id="3.30.470.20">
    <property type="entry name" value="ATP-grasp fold, B domain"/>
    <property type="match status" value="1"/>
</dbReference>
<dbReference type="HAMAP" id="MF_00162">
    <property type="entry name" value="GSH_S"/>
    <property type="match status" value="1"/>
</dbReference>
<dbReference type="InterPro" id="IPR011761">
    <property type="entry name" value="ATP-grasp"/>
</dbReference>
<dbReference type="InterPro" id="IPR013815">
    <property type="entry name" value="ATP_grasp_subdomain_1"/>
</dbReference>
<dbReference type="InterPro" id="IPR006284">
    <property type="entry name" value="Glut_synth_pro"/>
</dbReference>
<dbReference type="InterPro" id="IPR004218">
    <property type="entry name" value="GSHS_ATP-bd"/>
</dbReference>
<dbReference type="InterPro" id="IPR004215">
    <property type="entry name" value="GSHS_N"/>
</dbReference>
<dbReference type="InterPro" id="IPR016185">
    <property type="entry name" value="PreATP-grasp_dom_sf"/>
</dbReference>
<dbReference type="NCBIfam" id="TIGR01380">
    <property type="entry name" value="glut_syn"/>
    <property type="match status" value="1"/>
</dbReference>
<dbReference type="NCBIfam" id="NF003573">
    <property type="entry name" value="PRK05246.1"/>
    <property type="match status" value="1"/>
</dbReference>
<dbReference type="PANTHER" id="PTHR21621:SF4">
    <property type="entry name" value="GLUTATHIONE SYNTHETASE"/>
    <property type="match status" value="1"/>
</dbReference>
<dbReference type="PANTHER" id="PTHR21621">
    <property type="entry name" value="RIBOSOMAL PROTEIN S6 MODIFICATION PROTEIN"/>
    <property type="match status" value="1"/>
</dbReference>
<dbReference type="Pfam" id="PF02955">
    <property type="entry name" value="GSH-S_ATP"/>
    <property type="match status" value="1"/>
</dbReference>
<dbReference type="Pfam" id="PF02951">
    <property type="entry name" value="GSH-S_N"/>
    <property type="match status" value="1"/>
</dbReference>
<dbReference type="SUPFAM" id="SSF56059">
    <property type="entry name" value="Glutathione synthetase ATP-binding domain-like"/>
    <property type="match status" value="1"/>
</dbReference>
<dbReference type="SUPFAM" id="SSF52440">
    <property type="entry name" value="PreATP-grasp domain"/>
    <property type="match status" value="1"/>
</dbReference>
<dbReference type="PROSITE" id="PS50975">
    <property type="entry name" value="ATP_GRASP"/>
    <property type="match status" value="1"/>
</dbReference>